<reference key="1">
    <citation type="submission" date="2005-03" db="EMBL/GenBank/DDBJ databases">
        <title>Brevibacillus brevis strain 47, complete genome.</title>
        <authorList>
            <person name="Hosoyama A."/>
            <person name="Yamada R."/>
            <person name="Hongo Y."/>
            <person name="Terui Y."/>
            <person name="Ankai A."/>
            <person name="Masuyama W."/>
            <person name="Sekiguchi M."/>
            <person name="Takeda T."/>
            <person name="Asano K."/>
            <person name="Ohji S."/>
            <person name="Ichikawa N."/>
            <person name="Narita S."/>
            <person name="Aoki N."/>
            <person name="Miura H."/>
            <person name="Matsushita S."/>
            <person name="Sekigawa T."/>
            <person name="Yamagata H."/>
            <person name="Yoshikawa H."/>
            <person name="Udaka S."/>
            <person name="Tanikawa S."/>
            <person name="Fujita N."/>
        </authorList>
    </citation>
    <scope>NUCLEOTIDE SEQUENCE [LARGE SCALE GENOMIC DNA]</scope>
    <source>
        <strain>47 / JCM 6285 / NBRC 100599</strain>
    </source>
</reference>
<evidence type="ECO:0000255" key="1">
    <source>
        <dbReference type="HAMAP-Rule" id="MF_00171"/>
    </source>
</evidence>
<name>TRUA_BREBN</name>
<comment type="function">
    <text evidence="1">Formation of pseudouridine at positions 38, 39 and 40 in the anticodon stem and loop of transfer RNAs.</text>
</comment>
<comment type="catalytic activity">
    <reaction evidence="1">
        <text>uridine(38/39/40) in tRNA = pseudouridine(38/39/40) in tRNA</text>
        <dbReference type="Rhea" id="RHEA:22376"/>
        <dbReference type="Rhea" id="RHEA-COMP:10085"/>
        <dbReference type="Rhea" id="RHEA-COMP:10087"/>
        <dbReference type="ChEBI" id="CHEBI:65314"/>
        <dbReference type="ChEBI" id="CHEBI:65315"/>
        <dbReference type="EC" id="5.4.99.12"/>
    </reaction>
</comment>
<comment type="subunit">
    <text evidence="1">Homodimer.</text>
</comment>
<comment type="similarity">
    <text evidence="1">Belongs to the tRNA pseudouridine synthase TruA family.</text>
</comment>
<dbReference type="EC" id="5.4.99.12" evidence="1"/>
<dbReference type="EMBL" id="AP008955">
    <property type="protein sequence ID" value="BAH41230.1"/>
    <property type="molecule type" value="Genomic_DNA"/>
</dbReference>
<dbReference type="RefSeq" id="WP_012684004.1">
    <property type="nucleotide sequence ID" value="NC_012491.1"/>
</dbReference>
<dbReference type="SMR" id="C0ZIL2"/>
<dbReference type="STRING" id="358681.BBR47_02530"/>
<dbReference type="KEGG" id="bbe:BBR47_02530"/>
<dbReference type="eggNOG" id="COG0101">
    <property type="taxonomic scope" value="Bacteria"/>
</dbReference>
<dbReference type="HOGENOM" id="CLU_014673_0_1_9"/>
<dbReference type="Proteomes" id="UP000001877">
    <property type="component" value="Chromosome"/>
</dbReference>
<dbReference type="GO" id="GO:0003723">
    <property type="term" value="F:RNA binding"/>
    <property type="evidence" value="ECO:0007669"/>
    <property type="project" value="InterPro"/>
</dbReference>
<dbReference type="GO" id="GO:0160147">
    <property type="term" value="F:tRNA pseudouridine(38-40) synthase activity"/>
    <property type="evidence" value="ECO:0007669"/>
    <property type="project" value="UniProtKB-EC"/>
</dbReference>
<dbReference type="GO" id="GO:0031119">
    <property type="term" value="P:tRNA pseudouridine synthesis"/>
    <property type="evidence" value="ECO:0007669"/>
    <property type="project" value="UniProtKB-UniRule"/>
</dbReference>
<dbReference type="CDD" id="cd02570">
    <property type="entry name" value="PseudoU_synth_EcTruA"/>
    <property type="match status" value="1"/>
</dbReference>
<dbReference type="FunFam" id="3.30.70.580:FF:000001">
    <property type="entry name" value="tRNA pseudouridine synthase A"/>
    <property type="match status" value="1"/>
</dbReference>
<dbReference type="Gene3D" id="3.30.70.660">
    <property type="entry name" value="Pseudouridine synthase I, catalytic domain, C-terminal subdomain"/>
    <property type="match status" value="1"/>
</dbReference>
<dbReference type="Gene3D" id="3.30.70.580">
    <property type="entry name" value="Pseudouridine synthase I, catalytic domain, N-terminal subdomain"/>
    <property type="match status" value="1"/>
</dbReference>
<dbReference type="HAMAP" id="MF_00171">
    <property type="entry name" value="TruA"/>
    <property type="match status" value="1"/>
</dbReference>
<dbReference type="InterPro" id="IPR020103">
    <property type="entry name" value="PsdUridine_synth_cat_dom_sf"/>
</dbReference>
<dbReference type="InterPro" id="IPR001406">
    <property type="entry name" value="PsdUridine_synth_TruA"/>
</dbReference>
<dbReference type="InterPro" id="IPR020097">
    <property type="entry name" value="PsdUridine_synth_TruA_a/b_dom"/>
</dbReference>
<dbReference type="InterPro" id="IPR020095">
    <property type="entry name" value="PsdUridine_synth_TruA_C"/>
</dbReference>
<dbReference type="InterPro" id="IPR020094">
    <property type="entry name" value="TruA/RsuA/RluB/E/F_N"/>
</dbReference>
<dbReference type="NCBIfam" id="TIGR00071">
    <property type="entry name" value="hisT_truA"/>
    <property type="match status" value="1"/>
</dbReference>
<dbReference type="PANTHER" id="PTHR11142">
    <property type="entry name" value="PSEUDOURIDYLATE SYNTHASE"/>
    <property type="match status" value="1"/>
</dbReference>
<dbReference type="PANTHER" id="PTHR11142:SF0">
    <property type="entry name" value="TRNA PSEUDOURIDINE SYNTHASE-LIKE 1"/>
    <property type="match status" value="1"/>
</dbReference>
<dbReference type="Pfam" id="PF01416">
    <property type="entry name" value="PseudoU_synth_1"/>
    <property type="match status" value="2"/>
</dbReference>
<dbReference type="PIRSF" id="PIRSF001430">
    <property type="entry name" value="tRNA_psdUrid_synth"/>
    <property type="match status" value="1"/>
</dbReference>
<dbReference type="SUPFAM" id="SSF55120">
    <property type="entry name" value="Pseudouridine synthase"/>
    <property type="match status" value="1"/>
</dbReference>
<organism>
    <name type="scientific">Brevibacillus brevis (strain 47 / JCM 6285 / NBRC 100599)</name>
    <dbReference type="NCBI Taxonomy" id="358681"/>
    <lineage>
        <taxon>Bacteria</taxon>
        <taxon>Bacillati</taxon>
        <taxon>Bacillota</taxon>
        <taxon>Bacilli</taxon>
        <taxon>Bacillales</taxon>
        <taxon>Paenibacillaceae</taxon>
        <taxon>Brevibacillus</taxon>
    </lineage>
</organism>
<keyword id="KW-0413">Isomerase</keyword>
<keyword id="KW-1185">Reference proteome</keyword>
<keyword id="KW-0819">tRNA processing</keyword>
<accession>C0ZIL2</accession>
<proteinExistence type="inferred from homology"/>
<gene>
    <name evidence="1" type="primary">truA</name>
    <name type="ordered locus">BBR47_02530</name>
</gene>
<protein>
    <recommendedName>
        <fullName evidence="1">tRNA pseudouridine synthase A</fullName>
        <ecNumber evidence="1">5.4.99.12</ecNumber>
    </recommendedName>
    <alternativeName>
        <fullName evidence="1">tRNA pseudouridine(38-40) synthase</fullName>
    </alternativeName>
    <alternativeName>
        <fullName evidence="1">tRNA pseudouridylate synthase I</fullName>
    </alternativeName>
    <alternativeName>
        <fullName evidence="1">tRNA-uridine isomerase I</fullName>
    </alternativeName>
</protein>
<sequence>MKRLRCVLAYDGTDFSGFQVQPDQVTVQGEIEAALNRVTGEDIQVFGSGRTDAGVHARGQVIHFDTASNIPMDKWRFVLNNQLPDSIVIRTVEEVDASFHARFDVQVKEYRYCIDNNPVADVFRHRYADHVRFPLDVDAMQQAAHYLVGEHDFTSFCSAKTYVEDKVRTVYGLSVEKIGDEVWVTCRGNGFLYNMVRIIVGTLVEVGQGKRNPAELREILAACDREKAGKTAPAKGLTMWEVVY</sequence>
<feature type="chain" id="PRO_1000194533" description="tRNA pseudouridine synthase A">
    <location>
        <begin position="1"/>
        <end position="244"/>
    </location>
</feature>
<feature type="active site" description="Nucleophile" evidence="1">
    <location>
        <position position="52"/>
    </location>
</feature>
<feature type="binding site" evidence="1">
    <location>
        <position position="110"/>
    </location>
    <ligand>
        <name>substrate</name>
    </ligand>
</feature>